<gene>
    <name type="primary">HUS1B</name>
</gene>
<sequence length="278" mass="30982">MKFRAKITGKGCLELFIHVSGTVARLAKVCVLRVRPDSLCFGPAGSGGLHEARLWCEVRQGAFQQFRMEGVSEDLDEIHLELTAEHLSRAARSAAGASSLKLQLTHKRRPSLTVAVELVSSLGRARSVVHDLPVRVLPRRVWRDCLPPSLRASDASIRLPRWRTLRSIVERMANVGSHVLVEANLSGRMTLSIETEVVSIQSYFKNLGNPPQSAVGVPENRDLESMVQVRVDNRKLLQFLEGQQIHPTTALCNIWDNTLLQLVLVQEDVSLQYFIPAL</sequence>
<organism>
    <name type="scientific">Homo sapiens</name>
    <name type="common">Human</name>
    <dbReference type="NCBI Taxonomy" id="9606"/>
    <lineage>
        <taxon>Eukaryota</taxon>
        <taxon>Metazoa</taxon>
        <taxon>Chordata</taxon>
        <taxon>Craniata</taxon>
        <taxon>Vertebrata</taxon>
        <taxon>Euteleostomi</taxon>
        <taxon>Mammalia</taxon>
        <taxon>Eutheria</taxon>
        <taxon>Euarchontoglires</taxon>
        <taxon>Primates</taxon>
        <taxon>Haplorrhini</taxon>
        <taxon>Catarrhini</taxon>
        <taxon>Hominidae</taxon>
        <taxon>Homo</taxon>
    </lineage>
</organism>
<dbReference type="EMBL" id="AF508547">
    <property type="protein sequence ID" value="AAM28904.1"/>
    <property type="molecule type" value="mRNA"/>
</dbReference>
<dbReference type="EMBL" id="AL357054">
    <property type="status" value="NOT_ANNOTATED_CDS"/>
    <property type="molecule type" value="Genomic_DNA"/>
</dbReference>
<dbReference type="EMBL" id="BC101697">
    <property type="protein sequence ID" value="AAI01698.1"/>
    <property type="molecule type" value="mRNA"/>
</dbReference>
<dbReference type="EMBL" id="BC101699">
    <property type="protein sequence ID" value="AAI01700.1"/>
    <property type="molecule type" value="mRNA"/>
</dbReference>
<dbReference type="CCDS" id="CCDS4470.1"/>
<dbReference type="RefSeq" id="NP_683762.2">
    <property type="nucleotide sequence ID" value="NM_148959.3"/>
</dbReference>
<dbReference type="SMR" id="Q8NHY5"/>
<dbReference type="BioGRID" id="126430">
    <property type="interactions" value="23"/>
</dbReference>
<dbReference type="CORUM" id="Q8NHY5"/>
<dbReference type="FunCoup" id="Q8NHY5">
    <property type="interactions" value="9"/>
</dbReference>
<dbReference type="IntAct" id="Q8NHY5">
    <property type="interactions" value="24"/>
</dbReference>
<dbReference type="STRING" id="9606.ENSP00000370293"/>
<dbReference type="iPTMnet" id="Q8NHY5"/>
<dbReference type="PhosphoSitePlus" id="Q8NHY5"/>
<dbReference type="BioMuta" id="HUS1B"/>
<dbReference type="DMDM" id="311033394"/>
<dbReference type="jPOST" id="Q8NHY5"/>
<dbReference type="MassIVE" id="Q8NHY5"/>
<dbReference type="PaxDb" id="9606-ENSP00000370293"/>
<dbReference type="PeptideAtlas" id="Q8NHY5"/>
<dbReference type="ProteomicsDB" id="73790"/>
<dbReference type="Antibodypedia" id="24237">
    <property type="antibodies" value="117 antibodies from 28 providers"/>
</dbReference>
<dbReference type="DNASU" id="135458"/>
<dbReference type="Ensembl" id="ENST00000380907.3">
    <property type="protein sequence ID" value="ENSP00000370293.2"/>
    <property type="gene ID" value="ENSG00000188996.5"/>
</dbReference>
<dbReference type="GeneID" id="135458"/>
<dbReference type="KEGG" id="hsa:135458"/>
<dbReference type="MANE-Select" id="ENST00000380907.3">
    <property type="protein sequence ID" value="ENSP00000370293.2"/>
    <property type="RefSeq nucleotide sequence ID" value="NM_148959.4"/>
    <property type="RefSeq protein sequence ID" value="NP_683762.2"/>
</dbReference>
<dbReference type="UCSC" id="uc003mtg.4">
    <property type="organism name" value="human"/>
</dbReference>
<dbReference type="AGR" id="HGNC:16485"/>
<dbReference type="CTD" id="135458"/>
<dbReference type="DisGeNET" id="135458"/>
<dbReference type="GeneCards" id="HUS1B"/>
<dbReference type="HGNC" id="HGNC:16485">
    <property type="gene designation" value="HUS1B"/>
</dbReference>
<dbReference type="HPA" id="ENSG00000188996">
    <property type="expression patterns" value="Tissue enhanced (testis)"/>
</dbReference>
<dbReference type="MIM" id="609713">
    <property type="type" value="gene"/>
</dbReference>
<dbReference type="neXtProt" id="NX_Q8NHY5"/>
<dbReference type="OpenTargets" id="ENSG00000188996"/>
<dbReference type="PharmGKB" id="PA134939889"/>
<dbReference type="VEuPathDB" id="HostDB:ENSG00000188996"/>
<dbReference type="eggNOG" id="KOG3999">
    <property type="taxonomic scope" value="Eukaryota"/>
</dbReference>
<dbReference type="GeneTree" id="ENSGT00390000000706"/>
<dbReference type="HOGENOM" id="CLU_035754_1_0_1"/>
<dbReference type="InParanoid" id="Q8NHY5"/>
<dbReference type="OMA" id="QVRVDNR"/>
<dbReference type="OrthoDB" id="10063861at2759"/>
<dbReference type="PAN-GO" id="Q8NHY5">
    <property type="GO annotations" value="8 GO annotations based on evolutionary models"/>
</dbReference>
<dbReference type="PhylomeDB" id="Q8NHY5"/>
<dbReference type="TreeFam" id="TF314491"/>
<dbReference type="PathwayCommons" id="Q8NHY5"/>
<dbReference type="SignaLink" id="Q8NHY5"/>
<dbReference type="BioGRID-ORCS" id="135458">
    <property type="hits" value="6 hits in 1152 CRISPR screens"/>
</dbReference>
<dbReference type="GenomeRNAi" id="135458"/>
<dbReference type="Pharos" id="Q8NHY5">
    <property type="development level" value="Tdark"/>
</dbReference>
<dbReference type="PRO" id="PR:Q8NHY5"/>
<dbReference type="Proteomes" id="UP000005640">
    <property type="component" value="Chromosome 6"/>
</dbReference>
<dbReference type="RNAct" id="Q8NHY5">
    <property type="molecule type" value="protein"/>
</dbReference>
<dbReference type="Bgee" id="ENSG00000188996">
    <property type="expression patterns" value="Expressed in male germ line stem cell (sensu Vertebrata) in testis and 116 other cell types or tissues"/>
</dbReference>
<dbReference type="GO" id="GO:0030896">
    <property type="term" value="C:checkpoint clamp complex"/>
    <property type="evidence" value="ECO:0000318"/>
    <property type="project" value="GO_Central"/>
</dbReference>
<dbReference type="GO" id="GO:0005730">
    <property type="term" value="C:nucleolus"/>
    <property type="evidence" value="ECO:0007669"/>
    <property type="project" value="InterPro"/>
</dbReference>
<dbReference type="GO" id="GO:0035861">
    <property type="term" value="C:site of double-strand break"/>
    <property type="evidence" value="ECO:0000318"/>
    <property type="project" value="GO_Central"/>
</dbReference>
<dbReference type="GO" id="GO:0000724">
    <property type="term" value="P:double-strand break repair via homologous recombination"/>
    <property type="evidence" value="ECO:0000318"/>
    <property type="project" value="GO_Central"/>
</dbReference>
<dbReference type="GO" id="GO:0044778">
    <property type="term" value="P:meiotic DNA integrity checkpoint signaling"/>
    <property type="evidence" value="ECO:0000318"/>
    <property type="project" value="GO_Central"/>
</dbReference>
<dbReference type="GO" id="GO:0033314">
    <property type="term" value="P:mitotic DNA replication checkpoint signaling"/>
    <property type="evidence" value="ECO:0000318"/>
    <property type="project" value="GO_Central"/>
</dbReference>
<dbReference type="GO" id="GO:0031573">
    <property type="term" value="P:mitotic intra-S DNA damage checkpoint signaling"/>
    <property type="evidence" value="ECO:0000318"/>
    <property type="project" value="GO_Central"/>
</dbReference>
<dbReference type="GO" id="GO:0006289">
    <property type="term" value="P:nucleotide-excision repair"/>
    <property type="evidence" value="ECO:0000318"/>
    <property type="project" value="GO_Central"/>
</dbReference>
<dbReference type="GO" id="GO:0000723">
    <property type="term" value="P:telomere maintenance"/>
    <property type="evidence" value="ECO:0000318"/>
    <property type="project" value="GO_Central"/>
</dbReference>
<dbReference type="FunFam" id="3.70.10.10:FF:000018">
    <property type="entry name" value="Checkpoint protein"/>
    <property type="match status" value="1"/>
</dbReference>
<dbReference type="Gene3D" id="3.70.10.10">
    <property type="match status" value="1"/>
</dbReference>
<dbReference type="InterPro" id="IPR016580">
    <property type="entry name" value="Cell_cycle_HUS1"/>
</dbReference>
<dbReference type="InterPro" id="IPR007150">
    <property type="entry name" value="Hus1/Mec3"/>
</dbReference>
<dbReference type="PANTHER" id="PTHR12900:SF3">
    <property type="entry name" value="CHECKPOINT PROTEIN HUS1B"/>
    <property type="match status" value="1"/>
</dbReference>
<dbReference type="PANTHER" id="PTHR12900">
    <property type="entry name" value="MITOTIC AND DNA DAMAGE CHECKPOINT PROTEIN HUS1"/>
    <property type="match status" value="1"/>
</dbReference>
<dbReference type="Pfam" id="PF04005">
    <property type="entry name" value="Hus1"/>
    <property type="match status" value="1"/>
</dbReference>
<dbReference type="PIRSF" id="PIRSF011312">
    <property type="entry name" value="Cell_cycle_HUS1"/>
    <property type="match status" value="1"/>
</dbReference>
<name>HUS1B_HUMAN</name>
<accession>Q8NHY5</accession>
<accession>Q5T4Z2</accession>
<comment type="subunit">
    <text evidence="1 2">Interacts with RAD1 and RAD9B.</text>
</comment>
<comment type="tissue specificity">
    <text evidence="1">Expressed strongly in testis, less in spleen, thymus, prostate, colon and leukocytes.</text>
</comment>
<comment type="similarity">
    <text evidence="4">Belongs to the HUS1 family.</text>
</comment>
<reference key="1">
    <citation type="journal article" date="2002" name="Genomics">
        <title>Identification and characterization of a paralog of human cell cycle checkpoint gene HUS1.</title>
        <authorList>
            <person name="Hang H."/>
            <person name="Zhang Y."/>
            <person name="Dunbrack R.L. Jr."/>
            <person name="Wang C."/>
            <person name="Lieberman H.B."/>
        </authorList>
    </citation>
    <scope>NUCLEOTIDE SEQUENCE [MRNA]</scope>
    <scope>INTERACTION WITH RAD1</scope>
    <scope>TISSUE SPECIFICITY</scope>
    <scope>VARIANT TYR-268</scope>
</reference>
<reference key="2">
    <citation type="journal article" date="2003" name="Nature">
        <title>The DNA sequence and analysis of human chromosome 6.</title>
        <authorList>
            <person name="Mungall A.J."/>
            <person name="Palmer S.A."/>
            <person name="Sims S.K."/>
            <person name="Edwards C.A."/>
            <person name="Ashurst J.L."/>
            <person name="Wilming L."/>
            <person name="Jones M.C."/>
            <person name="Horton R."/>
            <person name="Hunt S.E."/>
            <person name="Scott C.E."/>
            <person name="Gilbert J.G.R."/>
            <person name="Clamp M.E."/>
            <person name="Bethel G."/>
            <person name="Milne S."/>
            <person name="Ainscough R."/>
            <person name="Almeida J.P."/>
            <person name="Ambrose K.D."/>
            <person name="Andrews T.D."/>
            <person name="Ashwell R.I.S."/>
            <person name="Babbage A.K."/>
            <person name="Bagguley C.L."/>
            <person name="Bailey J."/>
            <person name="Banerjee R."/>
            <person name="Barker D.J."/>
            <person name="Barlow K.F."/>
            <person name="Bates K."/>
            <person name="Beare D.M."/>
            <person name="Beasley H."/>
            <person name="Beasley O."/>
            <person name="Bird C.P."/>
            <person name="Blakey S.E."/>
            <person name="Bray-Allen S."/>
            <person name="Brook J."/>
            <person name="Brown A.J."/>
            <person name="Brown J.Y."/>
            <person name="Burford D.C."/>
            <person name="Burrill W."/>
            <person name="Burton J."/>
            <person name="Carder C."/>
            <person name="Carter N.P."/>
            <person name="Chapman J.C."/>
            <person name="Clark S.Y."/>
            <person name="Clark G."/>
            <person name="Clee C.M."/>
            <person name="Clegg S."/>
            <person name="Cobley V."/>
            <person name="Collier R.E."/>
            <person name="Collins J.E."/>
            <person name="Colman L.K."/>
            <person name="Corby N.R."/>
            <person name="Coville G.J."/>
            <person name="Culley K.M."/>
            <person name="Dhami P."/>
            <person name="Davies J."/>
            <person name="Dunn M."/>
            <person name="Earthrowl M.E."/>
            <person name="Ellington A.E."/>
            <person name="Evans K.A."/>
            <person name="Faulkner L."/>
            <person name="Francis M.D."/>
            <person name="Frankish A."/>
            <person name="Frankland J."/>
            <person name="French L."/>
            <person name="Garner P."/>
            <person name="Garnett J."/>
            <person name="Ghori M.J."/>
            <person name="Gilby L.M."/>
            <person name="Gillson C.J."/>
            <person name="Glithero R.J."/>
            <person name="Grafham D.V."/>
            <person name="Grant M."/>
            <person name="Gribble S."/>
            <person name="Griffiths C."/>
            <person name="Griffiths M.N.D."/>
            <person name="Hall R."/>
            <person name="Halls K.S."/>
            <person name="Hammond S."/>
            <person name="Harley J.L."/>
            <person name="Hart E.A."/>
            <person name="Heath P.D."/>
            <person name="Heathcott R."/>
            <person name="Holmes S.J."/>
            <person name="Howden P.J."/>
            <person name="Howe K.L."/>
            <person name="Howell G.R."/>
            <person name="Huckle E."/>
            <person name="Humphray S.J."/>
            <person name="Humphries M.D."/>
            <person name="Hunt A.R."/>
            <person name="Johnson C.M."/>
            <person name="Joy A.A."/>
            <person name="Kay M."/>
            <person name="Keenan S.J."/>
            <person name="Kimberley A.M."/>
            <person name="King A."/>
            <person name="Laird G.K."/>
            <person name="Langford C."/>
            <person name="Lawlor S."/>
            <person name="Leongamornlert D.A."/>
            <person name="Leversha M."/>
            <person name="Lloyd C.R."/>
            <person name="Lloyd D.M."/>
            <person name="Loveland J.E."/>
            <person name="Lovell J."/>
            <person name="Martin S."/>
            <person name="Mashreghi-Mohammadi M."/>
            <person name="Maslen G.L."/>
            <person name="Matthews L."/>
            <person name="McCann O.T."/>
            <person name="McLaren S.J."/>
            <person name="McLay K."/>
            <person name="McMurray A."/>
            <person name="Moore M.J.F."/>
            <person name="Mullikin J.C."/>
            <person name="Niblett D."/>
            <person name="Nickerson T."/>
            <person name="Novik K.L."/>
            <person name="Oliver K."/>
            <person name="Overton-Larty E.K."/>
            <person name="Parker A."/>
            <person name="Patel R."/>
            <person name="Pearce A.V."/>
            <person name="Peck A.I."/>
            <person name="Phillimore B.J.C.T."/>
            <person name="Phillips S."/>
            <person name="Plumb R.W."/>
            <person name="Porter K.M."/>
            <person name="Ramsey Y."/>
            <person name="Ranby S.A."/>
            <person name="Rice C.M."/>
            <person name="Ross M.T."/>
            <person name="Searle S.M."/>
            <person name="Sehra H.K."/>
            <person name="Sheridan E."/>
            <person name="Skuce C.D."/>
            <person name="Smith S."/>
            <person name="Smith M."/>
            <person name="Spraggon L."/>
            <person name="Squares S.L."/>
            <person name="Steward C.A."/>
            <person name="Sycamore N."/>
            <person name="Tamlyn-Hall G."/>
            <person name="Tester J."/>
            <person name="Theaker A.J."/>
            <person name="Thomas D.W."/>
            <person name="Thorpe A."/>
            <person name="Tracey A."/>
            <person name="Tromans A."/>
            <person name="Tubby B."/>
            <person name="Wall M."/>
            <person name="Wallis J.M."/>
            <person name="West A.P."/>
            <person name="White S.S."/>
            <person name="Whitehead S.L."/>
            <person name="Whittaker H."/>
            <person name="Wild A."/>
            <person name="Willey D.J."/>
            <person name="Wilmer T.E."/>
            <person name="Wood J.M."/>
            <person name="Wray P.W."/>
            <person name="Wyatt J.C."/>
            <person name="Young L."/>
            <person name="Younger R.M."/>
            <person name="Bentley D.R."/>
            <person name="Coulson A."/>
            <person name="Durbin R.M."/>
            <person name="Hubbard T."/>
            <person name="Sulston J.E."/>
            <person name="Dunham I."/>
            <person name="Rogers J."/>
            <person name="Beck S."/>
        </authorList>
    </citation>
    <scope>NUCLEOTIDE SEQUENCE [LARGE SCALE GENOMIC DNA]</scope>
</reference>
<reference key="3">
    <citation type="journal article" date="2004" name="Genome Res.">
        <title>The status, quality, and expansion of the NIH full-length cDNA project: the Mammalian Gene Collection (MGC).</title>
        <authorList>
            <consortium name="The MGC Project Team"/>
        </authorList>
    </citation>
    <scope>NUCLEOTIDE SEQUENCE [LARGE SCALE MRNA]</scope>
    <scope>VARIANT TYR-268</scope>
    <source>
        <tissue>Liver</tissue>
    </source>
</reference>
<reference key="4">
    <citation type="journal article" date="2003" name="Cancer Res.">
        <title>Expression of mammalian paralogues of HRAD9 and Mrad9 checkpoint control genes in normal and cancerous testicular tissue.</title>
        <authorList>
            <person name="Hopkins K.M."/>
            <person name="Wang X."/>
            <person name="Berlin A."/>
            <person name="Hang H."/>
            <person name="Thaker H.M."/>
            <person name="Lieberman H.B."/>
        </authorList>
    </citation>
    <scope>INTERACTION WITH RAD9B</scope>
</reference>
<reference key="5">
    <citation type="journal article" date="2015" name="Proteomics">
        <title>N-terminome analysis of the human mitochondrial proteome.</title>
        <authorList>
            <person name="Vaca Jacome A.S."/>
            <person name="Rabilloud T."/>
            <person name="Schaeffer-Reiss C."/>
            <person name="Rompais M."/>
            <person name="Ayoub D."/>
            <person name="Lane L."/>
            <person name="Bairoch A."/>
            <person name="Van Dorsselaer A."/>
            <person name="Carapito C."/>
        </authorList>
    </citation>
    <scope>IDENTIFICATION BY MASS SPECTROMETRY [LARGE SCALE ANALYSIS]</scope>
</reference>
<keyword id="KW-1267">Proteomics identification</keyword>
<keyword id="KW-1185">Reference proteome</keyword>
<evidence type="ECO:0000269" key="1">
    <source>
    </source>
</evidence>
<evidence type="ECO:0000269" key="2">
    <source>
    </source>
</evidence>
<evidence type="ECO:0000269" key="3">
    <source>
    </source>
</evidence>
<evidence type="ECO:0000305" key="4"/>
<feature type="chain" id="PRO_0000226245" description="Checkpoint protein HUS1B">
    <location>
        <begin position="1"/>
        <end position="278"/>
    </location>
</feature>
<feature type="sequence variant" id="VAR_031206" description="In dbSNP:rs1766848.">
    <original>H</original>
    <variation>Q</variation>
    <location>
        <position position="130"/>
    </location>
</feature>
<feature type="sequence variant" id="VAR_031207" description="In dbSNP:rs17136239.">
    <original>Q</original>
    <variation>R</variation>
    <location>
        <position position="201"/>
    </location>
</feature>
<feature type="sequence variant" id="VAR_025497" description="In dbSNP:rs1211554." evidence="1 3">
    <original>D</original>
    <variation>Y</variation>
    <location>
        <position position="268"/>
    </location>
</feature>
<proteinExistence type="evidence at protein level"/>
<protein>
    <recommendedName>
        <fullName>Checkpoint protein HUS1B</fullName>
        <shortName>hHUS1B</shortName>
    </recommendedName>
</protein>